<evidence type="ECO:0000250" key="1"/>
<evidence type="ECO:0000250" key="2">
    <source>
        <dbReference type="UniProtKB" id="Q16594"/>
    </source>
</evidence>
<evidence type="ECO:0000250" key="3">
    <source>
        <dbReference type="UniProtKB" id="Q8VI33"/>
    </source>
</evidence>
<evidence type="ECO:0000255" key="4"/>
<evidence type="ECO:0000256" key="5">
    <source>
        <dbReference type="SAM" id="MobiDB-lite"/>
    </source>
</evidence>
<evidence type="ECO:0000305" key="6"/>
<evidence type="ECO:0000312" key="7">
    <source>
        <dbReference type="EMBL" id="AAH91109.1"/>
    </source>
</evidence>
<evidence type="ECO:0000312" key="8">
    <source>
        <dbReference type="EMBL" id="AAQ56726.1"/>
    </source>
</evidence>
<sequence length="264" mass="28994">MESGKMASPKSMPKDAQMMAQILKDMGITEYEPRVINQMLEFAFRYVTTILDDAKIYSSHAKKPTVDADDVRLAIQCRADQSFTSPPPRDFLLDIARQRNQTPLPLIKPYSGPRLPPDRYCLTAPNYRLKSLQKKAPTPAGRITVPRLSVGSVSSRPSTPTLGTPTPQAMSVSTKVGTPMSLTGQRFTVQMPASQSPAVKASIPATPAVQNVLINPSLIGSKNILITTNMVSQNTANESANALKRKREEEDDDDDDDDDDYDNL</sequence>
<organism>
    <name type="scientific">Rattus norvegicus</name>
    <name type="common">Rat</name>
    <dbReference type="NCBI Taxonomy" id="10116"/>
    <lineage>
        <taxon>Eukaryota</taxon>
        <taxon>Metazoa</taxon>
        <taxon>Chordata</taxon>
        <taxon>Craniata</taxon>
        <taxon>Vertebrata</taxon>
        <taxon>Euteleostomi</taxon>
        <taxon>Mammalia</taxon>
        <taxon>Eutheria</taxon>
        <taxon>Euarchontoglires</taxon>
        <taxon>Glires</taxon>
        <taxon>Rodentia</taxon>
        <taxon>Myomorpha</taxon>
        <taxon>Muroidea</taxon>
        <taxon>Muridae</taxon>
        <taxon>Murinae</taxon>
        <taxon>Rattus</taxon>
    </lineage>
</organism>
<accession>Q5BKE0</accession>
<accession>Q6UV34</accession>
<accession>Q7TP20</accession>
<dbReference type="EMBL" id="BC091109">
    <property type="protein sequence ID" value="AAH91109.1"/>
    <property type="molecule type" value="mRNA"/>
</dbReference>
<dbReference type="EMBL" id="AY325235">
    <property type="protein sequence ID" value="AAP92636.1"/>
    <property type="molecule type" value="mRNA"/>
</dbReference>
<dbReference type="EMBL" id="AY359819">
    <property type="protein sequence ID" value="AAQ56726.1"/>
    <property type="molecule type" value="mRNA"/>
</dbReference>
<dbReference type="RefSeq" id="NP_001032387.1">
    <property type="nucleotide sequence ID" value="NM_001037310.1"/>
</dbReference>
<dbReference type="RefSeq" id="NP_908937.2">
    <property type="nucleotide sequence ID" value="NM_184048.2"/>
</dbReference>
<dbReference type="SMR" id="Q5BKE0"/>
<dbReference type="FunCoup" id="Q5BKE0">
    <property type="interactions" value="2613"/>
</dbReference>
<dbReference type="GlyGen" id="Q5BKE0">
    <property type="glycosylation" value="2 sites"/>
</dbReference>
<dbReference type="PhosphoSitePlus" id="Q5BKE0"/>
<dbReference type="PaxDb" id="10116-ENSRNOP00000068397"/>
<dbReference type="Ensembl" id="ENSRNOT00000076061.2">
    <property type="protein sequence ID" value="ENSRNOP00000068116.2"/>
    <property type="gene ID" value="ENSRNOG00000039848.6"/>
</dbReference>
<dbReference type="Ensembl" id="ENSRNOT00000076786.3">
    <property type="protein sequence ID" value="ENSRNOP00000068424.2"/>
    <property type="gene ID" value="ENSRNOG00000039848.6"/>
</dbReference>
<dbReference type="GeneID" id="373541"/>
<dbReference type="KEGG" id="rno:373541"/>
<dbReference type="UCSC" id="RGD:727861">
    <property type="organism name" value="rat"/>
</dbReference>
<dbReference type="AGR" id="RGD:727861"/>
<dbReference type="CTD" id="6880"/>
<dbReference type="RGD" id="727861">
    <property type="gene designation" value="Taf9"/>
</dbReference>
<dbReference type="eggNOG" id="KOG3334">
    <property type="taxonomic scope" value="Eukaryota"/>
</dbReference>
<dbReference type="GeneTree" id="ENSGT00940000155097"/>
<dbReference type="InParanoid" id="Q5BKE0"/>
<dbReference type="OMA" id="IRHNSDH"/>
<dbReference type="OrthoDB" id="341924at2759"/>
<dbReference type="PhylomeDB" id="Q5BKE0"/>
<dbReference type="TreeFam" id="TF351417"/>
<dbReference type="Reactome" id="R-RNO-674695">
    <property type="pathway name" value="RNA Polymerase II Pre-transcription Events"/>
</dbReference>
<dbReference type="Reactome" id="R-RNO-6804756">
    <property type="pathway name" value="Regulation of TP53 Activity through Phosphorylation"/>
</dbReference>
<dbReference type="Reactome" id="R-RNO-6807505">
    <property type="pathway name" value="RNA polymerase II transcribes snRNA genes"/>
</dbReference>
<dbReference type="Reactome" id="R-RNO-73776">
    <property type="pathway name" value="RNA Polymerase II Promoter Escape"/>
</dbReference>
<dbReference type="Reactome" id="R-RNO-73779">
    <property type="pathway name" value="RNA Polymerase II Transcription Pre-Initiation And Promoter Opening"/>
</dbReference>
<dbReference type="Reactome" id="R-RNO-75953">
    <property type="pathway name" value="RNA Polymerase II Transcription Initiation"/>
</dbReference>
<dbReference type="Reactome" id="R-RNO-76042">
    <property type="pathway name" value="RNA Polymerase II Transcription Initiation And Promoter Clearance"/>
</dbReference>
<dbReference type="PRO" id="PR:Q5BKE0"/>
<dbReference type="Proteomes" id="UP000002494">
    <property type="component" value="Chromosome 2"/>
</dbReference>
<dbReference type="Bgee" id="ENSRNOG00000051258">
    <property type="expression patterns" value="Expressed in testis and 19 other cell types or tissues"/>
</dbReference>
<dbReference type="ExpressionAtlas" id="Q5BKE0">
    <property type="expression patterns" value="baseline"/>
</dbReference>
<dbReference type="GO" id="GO:0071339">
    <property type="term" value="C:MLL1 complex"/>
    <property type="evidence" value="ECO:0000250"/>
    <property type="project" value="UniProtKB"/>
</dbReference>
<dbReference type="GO" id="GO:0005634">
    <property type="term" value="C:nucleus"/>
    <property type="evidence" value="ECO:0000266"/>
    <property type="project" value="RGD"/>
</dbReference>
<dbReference type="GO" id="GO:0070761">
    <property type="term" value="C:pre-snoRNP complex"/>
    <property type="evidence" value="ECO:0000266"/>
    <property type="project" value="RGD"/>
</dbReference>
<dbReference type="GO" id="GO:0000124">
    <property type="term" value="C:SAGA complex"/>
    <property type="evidence" value="ECO:0000266"/>
    <property type="project" value="RGD"/>
</dbReference>
<dbReference type="GO" id="GO:0005669">
    <property type="term" value="C:transcription factor TFIID complex"/>
    <property type="evidence" value="ECO:0000266"/>
    <property type="project" value="RGD"/>
</dbReference>
<dbReference type="GO" id="GO:0033276">
    <property type="term" value="C:transcription factor TFTC complex"/>
    <property type="evidence" value="ECO:0000266"/>
    <property type="project" value="RGD"/>
</dbReference>
<dbReference type="GO" id="GO:0051117">
    <property type="term" value="F:ATPase binding"/>
    <property type="evidence" value="ECO:0000266"/>
    <property type="project" value="RGD"/>
</dbReference>
<dbReference type="GO" id="GO:0070742">
    <property type="term" value="F:C2H2 zinc finger domain binding"/>
    <property type="evidence" value="ECO:0000266"/>
    <property type="project" value="RGD"/>
</dbReference>
<dbReference type="GO" id="GO:0003677">
    <property type="term" value="F:DNA binding"/>
    <property type="evidence" value="ECO:0000266"/>
    <property type="project" value="RGD"/>
</dbReference>
<dbReference type="GO" id="GO:0140297">
    <property type="term" value="F:DNA-binding transcription factor binding"/>
    <property type="evidence" value="ECO:0000266"/>
    <property type="project" value="RGD"/>
</dbReference>
<dbReference type="GO" id="GO:0002039">
    <property type="term" value="F:p53 binding"/>
    <property type="evidence" value="ECO:0000266"/>
    <property type="project" value="RGD"/>
</dbReference>
<dbReference type="GO" id="GO:0046982">
    <property type="term" value="F:protein heterodimerization activity"/>
    <property type="evidence" value="ECO:0007669"/>
    <property type="project" value="InterPro"/>
</dbReference>
<dbReference type="GO" id="GO:0000976">
    <property type="term" value="F:transcription cis-regulatory region binding"/>
    <property type="evidence" value="ECO:0000266"/>
    <property type="project" value="RGD"/>
</dbReference>
<dbReference type="GO" id="GO:0003713">
    <property type="term" value="F:transcription coactivator activity"/>
    <property type="evidence" value="ECO:0000266"/>
    <property type="project" value="RGD"/>
</dbReference>
<dbReference type="GO" id="GO:0000492">
    <property type="term" value="P:box C/D snoRNP assembly"/>
    <property type="evidence" value="ECO:0000266"/>
    <property type="project" value="RGD"/>
</dbReference>
<dbReference type="GO" id="GO:0006338">
    <property type="term" value="P:chromatin remodeling"/>
    <property type="evidence" value="ECO:0007669"/>
    <property type="project" value="GOC"/>
</dbReference>
<dbReference type="GO" id="GO:0042789">
    <property type="term" value="P:mRNA transcription by RNA polymerase II"/>
    <property type="evidence" value="ECO:0000266"/>
    <property type="project" value="RGD"/>
</dbReference>
<dbReference type="GO" id="GO:0043066">
    <property type="term" value="P:negative regulation of apoptotic process"/>
    <property type="evidence" value="ECO:0000266"/>
    <property type="project" value="RGD"/>
</dbReference>
<dbReference type="GO" id="GO:0032435">
    <property type="term" value="P:negative regulation of proteasomal ubiquitin-dependent protein catabolic process"/>
    <property type="evidence" value="ECO:0000266"/>
    <property type="project" value="RGD"/>
</dbReference>
<dbReference type="GO" id="GO:0060760">
    <property type="term" value="P:positive regulation of response to cytokine stimulus"/>
    <property type="evidence" value="ECO:0000266"/>
    <property type="project" value="RGD"/>
</dbReference>
<dbReference type="GO" id="GO:0045944">
    <property type="term" value="P:positive regulation of transcription by RNA polymerase II"/>
    <property type="evidence" value="ECO:0000315"/>
    <property type="project" value="RGD"/>
</dbReference>
<dbReference type="GO" id="GO:0060261">
    <property type="term" value="P:positive regulation of transcription initiation by RNA polymerase II"/>
    <property type="evidence" value="ECO:0000266"/>
    <property type="project" value="RGD"/>
</dbReference>
<dbReference type="GO" id="GO:0050821">
    <property type="term" value="P:protein stabilization"/>
    <property type="evidence" value="ECO:0000266"/>
    <property type="project" value="RGD"/>
</dbReference>
<dbReference type="GO" id="GO:0006357">
    <property type="term" value="P:regulation of transcription by RNA polymerase II"/>
    <property type="evidence" value="ECO:0000266"/>
    <property type="project" value="RGD"/>
</dbReference>
<dbReference type="GO" id="GO:0070555">
    <property type="term" value="P:response to interleukin-1"/>
    <property type="evidence" value="ECO:0000266"/>
    <property type="project" value="RGD"/>
</dbReference>
<dbReference type="GO" id="GO:1902065">
    <property type="term" value="P:response to L-glutamate"/>
    <property type="evidence" value="ECO:0000270"/>
    <property type="project" value="RGD"/>
</dbReference>
<dbReference type="GO" id="GO:0051123">
    <property type="term" value="P:RNA polymerase II preinitiation complex assembly"/>
    <property type="evidence" value="ECO:0000266"/>
    <property type="project" value="RGD"/>
</dbReference>
<dbReference type="CDD" id="cd07979">
    <property type="entry name" value="HFD_TAF9"/>
    <property type="match status" value="1"/>
</dbReference>
<dbReference type="FunFam" id="1.10.20.10:FF:000018">
    <property type="entry name" value="Transcription initiation factor TFIID subunit 9"/>
    <property type="match status" value="1"/>
</dbReference>
<dbReference type="Gene3D" id="1.10.20.10">
    <property type="entry name" value="Histone, subunit A"/>
    <property type="match status" value="1"/>
</dbReference>
<dbReference type="InterPro" id="IPR009072">
    <property type="entry name" value="Histone-fold"/>
</dbReference>
<dbReference type="InterPro" id="IPR003162">
    <property type="entry name" value="TFIID-31"/>
</dbReference>
<dbReference type="InterPro" id="IPR051431">
    <property type="entry name" value="TFIID_subunit_9"/>
</dbReference>
<dbReference type="PANTHER" id="PTHR48068">
    <property type="entry name" value="TAF9 RNA POLYMERASE II, TATA BOX-BINDING PROTEIN (TBP)-ASSOCIATED FACTOR"/>
    <property type="match status" value="1"/>
</dbReference>
<dbReference type="PANTHER" id="PTHR48068:SF3">
    <property type="entry name" value="TRANSCRIPTION INITIATION FACTOR TFIID SUBUNIT 9"/>
    <property type="match status" value="1"/>
</dbReference>
<dbReference type="Pfam" id="PF02291">
    <property type="entry name" value="TFIID-31kDa"/>
    <property type="match status" value="1"/>
</dbReference>
<dbReference type="SUPFAM" id="SSF47113">
    <property type="entry name" value="Histone-fold"/>
    <property type="match status" value="1"/>
</dbReference>
<keyword id="KW-0007">Acetylation</keyword>
<keyword id="KW-0539">Nucleus</keyword>
<keyword id="KW-0597">Phosphoprotein</keyword>
<keyword id="KW-1185">Reference proteome</keyword>
<keyword id="KW-0804">Transcription</keyword>
<keyword id="KW-0805">Transcription regulation</keyword>
<comment type="function">
    <text evidence="2">The TFIID basal transcription factor complex plays a major role in the initiation of RNA polymerase II (Pol II)-dependent transcription. TFIID recognizes and binds promoters with or without a TATA box via its subunit TBP, a TATA-box-binding protein, and promotes assembly of the pre-initiation complex (PIC). The TFIID complex consists of TBP and TBP-associated factors (TAFs), including TAF1, TAF2, TAF3, TAF4, TAF5, TAF6, TAF7, TAF8, TAF9, TAF10, TAF11, TAF12 and TAF13. TAF9 is also a component of the TBP-free TAFII complex (TFTC), the PCAF histone acetylase complex and the STAGA transcription coactivator-HAT complex. TAF9 and its paralog TAF9B are involved in transcriptional activation as well as repression of distinct but overlapping sets of genes. Essential for cell viability. May have a role in gene regulation associated with apoptosis.</text>
</comment>
<comment type="subunit">
    <text evidence="2">Component of the TFIID basal transcription factor complex, composed of TATA-box-binding protein TBP, and a number of TBP-associated factors (TAFs), including TAF1, TAF2, TAF3, TAF4, TAF5, TAF6, TAF7, TAF8, TAF9, TAF10, TAF11, TAF12 and TAF13. Component of the TATA-binding protein-free TAF complex (TFTC), the PCAF histone acetylase complex and the STAGA transcription coactivator-HAT complex. The PCAF complex consists at least of TADA2L/ADA2, SUPT3H/SPT3, TADA3L/ADA3, TAF5L/PAF65-beta, TAF6L/PAF65-alpha, TAF10/TAFII30, TAF12/TAFII20, TAF9/TAFII31 and TRRAP. The STAGA transcription coactivator-HAT complex consists at least of SUPT3H, GCN5L2, SUPT7L, TAF5L, TAF6L, TADA3L, TAD1L, TAF10, TAF12, TRRAP and TAF9. Binds N-terminal domain of p53/TP53 which is essential for transcription. Component of some MLL1/MLL complex, at least composed of the core components KMT2A/MLL1, ASH2L, HCFC1/HCF1, WDR5 and RBBP5, as well as the facultative components BACC1, CHD8, E2F6, HSP70, INO80C, KANSL1, LAS1L, MAX, MCRS1, MGA, MYST1/MOF, PELP1, PHF20, PRP31, RING2, RUVB1/TIP49A, RUVB2/TIP49B, SENP3, TAF1, TAF4, TAF6, TAF7, TAF9 and TEX10. Binds TFIIB and the Herpes simplex virus activator VP16. Forms a heterodimer with TAF6 in a complex with the TAF4B-TAF12 heterodimer. Also interacts with TAF5. Binds directly DNA. Increased DNA binding when complexed with TAF6.</text>
</comment>
<comment type="subcellular location">
    <subcellularLocation>
        <location evidence="1">Nucleus</location>
    </subcellularLocation>
</comment>
<comment type="similarity">
    <text evidence="4">Belongs to the TAF9 family.</text>
</comment>
<comment type="caution">
    <text evidence="6">AK6 and TAF9 were initially considered as products of the same gene since they share two exons. However, they are translated from different initiation codons and reading frames and encode unrelated proteins. This arrangement is conserved in some mammalian species.</text>
</comment>
<proteinExistence type="evidence at transcript level"/>
<reference key="1">
    <citation type="journal article" date="2004" name="Genome Res.">
        <title>The status, quality, and expansion of the NIH full-length cDNA project: the Mammalian Gene Collection (MGC).</title>
        <authorList>
            <consortium name="The MGC Project Team"/>
        </authorList>
    </citation>
    <scope>NUCLEOTIDE SEQUENCE [LARGE SCALE MRNA]</scope>
    <source>
        <tissue>Liver</tissue>
    </source>
</reference>
<reference evidence="6 8" key="2">
    <citation type="journal article" date="2004" name="World J. Gastroenterol.">
        <title>Gene expression differences of regenerating rat liver in a short interval successive partial hepatectomy.</title>
        <authorList>
            <person name="Xu C.S."/>
            <person name="Zhang A.S."/>
            <person name="Han H.P."/>
            <person name="Yuan J.Y."/>
            <person name="Chang C.F."/>
            <person name="Li W.Q."/>
            <person name="Yang K.J."/>
            <person name="Zhao L.F."/>
            <person name="Li Y.C."/>
            <person name="Zhang H.Y."/>
            <person name="Rahman S."/>
            <person name="Zhang J.B."/>
        </authorList>
    </citation>
    <scope>NUCLEOTIDE SEQUENCE [MRNA] OF 6-264</scope>
    <source>
        <strain evidence="8">Sprague-Dawley</strain>
    </source>
</reference>
<gene>
    <name evidence="7" type="primary">Taf9</name>
    <name evidence="2" type="synonym">Taf2g</name>
    <name evidence="2" type="synonym">Tafii31</name>
</gene>
<name>TAF9_RAT</name>
<feature type="chain" id="PRO_0000118890" description="Transcription initiation factor TFIID subunit 9">
    <location>
        <begin position="1"/>
        <end position="264"/>
    </location>
</feature>
<feature type="region of interest" description="Disordered" evidence="5">
    <location>
        <begin position="150"/>
        <end position="174"/>
    </location>
</feature>
<feature type="region of interest" description="Disordered" evidence="5">
    <location>
        <begin position="233"/>
        <end position="264"/>
    </location>
</feature>
<feature type="compositionally biased region" description="Polar residues" evidence="5">
    <location>
        <begin position="151"/>
        <end position="174"/>
    </location>
</feature>
<feature type="compositionally biased region" description="Acidic residues" evidence="5">
    <location>
        <begin position="249"/>
        <end position="264"/>
    </location>
</feature>
<feature type="modified residue" description="N6-acetyllysine" evidence="2">
    <location>
        <position position="5"/>
    </location>
</feature>
<feature type="modified residue" description="Phosphoserine" evidence="2">
    <location>
        <position position="149"/>
    </location>
</feature>
<feature type="modified residue" description="Phosphoserine" evidence="2">
    <location>
        <position position="152"/>
    </location>
</feature>
<feature type="modified residue" description="Phosphoserine" evidence="3">
    <location>
        <position position="155"/>
    </location>
</feature>
<feature type="modified residue" description="Phosphoserine" evidence="2">
    <location>
        <position position="158"/>
    </location>
</feature>
<feature type="modified residue" description="Phosphothreonine" evidence="2">
    <location>
        <position position="159"/>
    </location>
</feature>
<feature type="modified residue" description="Phosphothreonine" evidence="2">
    <location>
        <position position="161"/>
    </location>
</feature>
<feature type="modified residue" description="Phosphothreonine" evidence="3">
    <location>
        <position position="164"/>
    </location>
</feature>
<feature type="modified residue" description="Phosphothreonine" evidence="2">
    <location>
        <position position="178"/>
    </location>
</feature>
<feature type="modified residue" description="Phosphoserine" evidence="2">
    <location>
        <position position="181"/>
    </location>
</feature>
<feature type="modified residue" description="Phosphoserine" evidence="2">
    <location>
        <position position="196"/>
    </location>
</feature>
<feature type="sequence conflict" description="In Ref. 2; AAQ56726." evidence="6" ref="2">
    <original>F</original>
    <variation>L</variation>
    <location>
        <position position="44"/>
    </location>
</feature>
<feature type="sequence conflict" description="In Ref. 2; AAQ56726." evidence="6" ref="2">
    <original>A</original>
    <variation>P</variation>
    <location>
        <position position="74"/>
    </location>
</feature>
<feature type="sequence conflict" description="In Ref. 2; AAQ56726." evidence="6" ref="2">
    <original>Q</original>
    <variation>H</variation>
    <location>
        <position position="81"/>
    </location>
</feature>
<feature type="sequence conflict" description="In Ref. 2; AAQ56726." evidence="6" ref="2">
    <original>M</original>
    <variation>V</variation>
    <location>
        <position position="170"/>
    </location>
</feature>
<protein>
    <recommendedName>
        <fullName>Transcription initiation factor TFIID subunit 9</fullName>
    </recommendedName>
    <alternativeName>
        <fullName>RNA polymerase II TBP-associated factor subunit G</fullName>
    </alternativeName>
    <alternativeName>
        <fullName>Transcription initiation factor TFIID 31 kDa subunit</fullName>
        <shortName>TAFII-31</shortName>
        <shortName>TAFII31</shortName>
    </alternativeName>
    <alternativeName>
        <fullName>Transcription initiation factor TFIID 32 kDa subunit</fullName>
        <shortName>TAFII-32</shortName>
        <shortName>TAFII32</shortName>
    </alternativeName>
</protein>